<gene>
    <name type="primary">JHD1</name>
    <name type="ordered locus">CAALFM_CR00750CA</name>
    <name type="ORF">CaO19.10791</name>
    <name type="ORF">CaO19.3281</name>
</gene>
<keyword id="KW-0156">Chromatin regulator</keyword>
<keyword id="KW-0223">Dioxygenase</keyword>
<keyword id="KW-0408">Iron</keyword>
<keyword id="KW-0479">Metal-binding</keyword>
<keyword id="KW-0539">Nucleus</keyword>
<keyword id="KW-0560">Oxidoreductase</keyword>
<keyword id="KW-1185">Reference proteome</keyword>
<keyword id="KW-0804">Transcription</keyword>
<keyword id="KW-0805">Transcription regulation</keyword>
<keyword id="KW-0862">Zinc</keyword>
<keyword id="KW-0863">Zinc-finger</keyword>
<feature type="chain" id="PRO_0000226793" description="JmjC domain-containing histone demethylation protein 1">
    <location>
        <begin position="1"/>
        <end position="478"/>
    </location>
</feature>
<feature type="domain" description="JmjC" evidence="4">
    <location>
        <begin position="217"/>
        <end position="383"/>
    </location>
</feature>
<feature type="zinc finger region" description="PHD-type" evidence="3">
    <location>
        <begin position="5"/>
        <end position="68"/>
    </location>
</feature>
<feature type="binding site" evidence="1">
    <location>
        <position position="266"/>
    </location>
    <ligand>
        <name>substrate</name>
    </ligand>
</feature>
<feature type="binding site" evidence="4">
    <location>
        <position position="269"/>
    </location>
    <ligand>
        <name>Fe cation</name>
        <dbReference type="ChEBI" id="CHEBI:24875"/>
        <note>catalytic</note>
    </ligand>
</feature>
<feature type="binding site" evidence="4">
    <location>
        <position position="271"/>
    </location>
    <ligand>
        <name>Fe cation</name>
        <dbReference type="ChEBI" id="CHEBI:24875"/>
        <note>catalytic</note>
    </ligand>
</feature>
<feature type="binding site" evidence="1">
    <location>
        <position position="286"/>
    </location>
    <ligand>
        <name>substrate</name>
    </ligand>
</feature>
<feature type="binding site" evidence="4">
    <location>
        <position position="351"/>
    </location>
    <ligand>
        <name>Fe cation</name>
        <dbReference type="ChEBI" id="CHEBI:24875"/>
        <note>catalytic</note>
    </ligand>
</feature>
<accession>Q5A847</accession>
<accession>A0A1D8PRT4</accession>
<name>JHD1_CANAL</name>
<proteinExistence type="inferred from homology"/>
<reference key="1">
    <citation type="journal article" date="2004" name="Proc. Natl. Acad. Sci. U.S.A.">
        <title>The diploid genome sequence of Candida albicans.</title>
        <authorList>
            <person name="Jones T."/>
            <person name="Federspiel N.A."/>
            <person name="Chibana H."/>
            <person name="Dungan J."/>
            <person name="Kalman S."/>
            <person name="Magee B.B."/>
            <person name="Newport G."/>
            <person name="Thorstenson Y.R."/>
            <person name="Agabian N."/>
            <person name="Magee P.T."/>
            <person name="Davis R.W."/>
            <person name="Scherer S."/>
        </authorList>
    </citation>
    <scope>NUCLEOTIDE SEQUENCE [LARGE SCALE GENOMIC DNA]</scope>
    <source>
        <strain>SC5314 / ATCC MYA-2876</strain>
    </source>
</reference>
<reference key="2">
    <citation type="journal article" date="2007" name="Genome Biol.">
        <title>Assembly of the Candida albicans genome into sixteen supercontigs aligned on the eight chromosomes.</title>
        <authorList>
            <person name="van het Hoog M."/>
            <person name="Rast T.J."/>
            <person name="Martchenko M."/>
            <person name="Grindle S."/>
            <person name="Dignard D."/>
            <person name="Hogues H."/>
            <person name="Cuomo C."/>
            <person name="Berriman M."/>
            <person name="Scherer S."/>
            <person name="Magee B.B."/>
            <person name="Whiteway M."/>
            <person name="Chibana H."/>
            <person name="Nantel A."/>
            <person name="Magee P.T."/>
        </authorList>
    </citation>
    <scope>GENOME REANNOTATION</scope>
    <source>
        <strain>SC5314 / ATCC MYA-2876</strain>
    </source>
</reference>
<reference key="3">
    <citation type="journal article" date="2013" name="Genome Biol.">
        <title>Assembly of a phased diploid Candida albicans genome facilitates allele-specific measurements and provides a simple model for repeat and indel structure.</title>
        <authorList>
            <person name="Muzzey D."/>
            <person name="Schwartz K."/>
            <person name="Weissman J.S."/>
            <person name="Sherlock G."/>
        </authorList>
    </citation>
    <scope>NUCLEOTIDE SEQUENCE [LARGE SCALE GENOMIC DNA]</scope>
    <scope>GENOME REANNOTATION</scope>
    <source>
        <strain>SC5314 / ATCC MYA-2876</strain>
    </source>
</reference>
<sequence length="478" mass="55460">MPINSESCPLCKVHSNTIKKEDEDEEDNKTSWIQCSKCKVWYHVHCLDLPTDEIDQIVIYHCPECVPKYGESTYKRKSKRARVSIDYQSLNEGDTFAIDKSSHFHLHNFLNFKGETNINVIDKLTKTYALNTQMEKPILIPQADLSKNGMQLPIEKNEITIDYITDCCGEDTPLEVMDVISQQGISPPWKLKQWREYFKTNEEKRDRIRNVISLEISDVAKLGVDFTRPKCVRDMDVVDRVWIEEDEQKRSKVTKYCLMSVKNSFTDFHIDFGGTSVYYTVLSGAKTFLFFPPTDNNLELYKSWCLEPSQNFIWYPEYTITKNKKKIKPTGGFKVDLQPGDLFIIPSGWIHAVHTPQDSIVIGGNYLTIRDMVMQLKINEIERETKVPTKFRFPMFNKVLWLTAWYYYNHQNEFQSDIGEDEDGNAILTRLIGHLQGHLELSKTNATAKRSIPKTIGKPMVFINKLLAWKEDLYGTAV</sequence>
<evidence type="ECO:0000250" key="1"/>
<evidence type="ECO:0000250" key="2">
    <source>
        <dbReference type="UniProtKB" id="P40034"/>
    </source>
</evidence>
<evidence type="ECO:0000255" key="3">
    <source>
        <dbReference type="PROSITE-ProRule" id="PRU00146"/>
    </source>
</evidence>
<evidence type="ECO:0000255" key="4">
    <source>
        <dbReference type="PROSITE-ProRule" id="PRU00538"/>
    </source>
</evidence>
<evidence type="ECO:0000305" key="5"/>
<comment type="function">
    <text evidence="2">Histone demethylase that specifically demethylates 'Lys-36' of histone H3, thereby playing a central role in histone code.</text>
</comment>
<comment type="catalytic activity">
    <reaction evidence="2">
        <text>N(6),N(6)-dimethyl-L-lysyl(36)-[histone H3] + 2 2-oxoglutarate + 2 O2 = L-lysyl(36)-[histone H3] + 2 formaldehyde + 2 succinate + 2 CO2</text>
        <dbReference type="Rhea" id="RHEA:42032"/>
        <dbReference type="Rhea" id="RHEA-COMP:9785"/>
        <dbReference type="Rhea" id="RHEA-COMP:9787"/>
        <dbReference type="ChEBI" id="CHEBI:15379"/>
        <dbReference type="ChEBI" id="CHEBI:16526"/>
        <dbReference type="ChEBI" id="CHEBI:16810"/>
        <dbReference type="ChEBI" id="CHEBI:16842"/>
        <dbReference type="ChEBI" id="CHEBI:29969"/>
        <dbReference type="ChEBI" id="CHEBI:30031"/>
        <dbReference type="ChEBI" id="CHEBI:61976"/>
        <dbReference type="EC" id="1.14.11.27"/>
    </reaction>
</comment>
<comment type="cofactor">
    <cofactor evidence="1">
        <name>Fe(2+)</name>
        <dbReference type="ChEBI" id="CHEBI:29033"/>
    </cofactor>
    <text evidence="1">Binds 1 Fe(2+) ion per subunit.</text>
</comment>
<comment type="subcellular location">
    <subcellularLocation>
        <location evidence="1">Nucleus</location>
    </subcellularLocation>
</comment>
<comment type="domain">
    <text evidence="1">The JmjC domain mediates the demethylation activity.</text>
</comment>
<comment type="similarity">
    <text evidence="5">Belongs to the JHDM1 histone demethylase family.</text>
</comment>
<protein>
    <recommendedName>
        <fullName>JmjC domain-containing histone demethylation protein 1</fullName>
        <ecNumber evidence="2">1.14.11.27</ecNumber>
    </recommendedName>
    <alternativeName>
        <fullName>[Histone-H3]-lysine-36 demethylase 1</fullName>
    </alternativeName>
</protein>
<organism>
    <name type="scientific">Candida albicans (strain SC5314 / ATCC MYA-2876)</name>
    <name type="common">Yeast</name>
    <dbReference type="NCBI Taxonomy" id="237561"/>
    <lineage>
        <taxon>Eukaryota</taxon>
        <taxon>Fungi</taxon>
        <taxon>Dikarya</taxon>
        <taxon>Ascomycota</taxon>
        <taxon>Saccharomycotina</taxon>
        <taxon>Pichiomycetes</taxon>
        <taxon>Debaryomycetaceae</taxon>
        <taxon>Candida/Lodderomyces clade</taxon>
        <taxon>Candida</taxon>
    </lineage>
</organism>
<dbReference type="EC" id="1.14.11.27" evidence="2"/>
<dbReference type="EMBL" id="CP017630">
    <property type="protein sequence ID" value="AOW30842.1"/>
    <property type="molecule type" value="Genomic_DNA"/>
</dbReference>
<dbReference type="RefSeq" id="XP_717971.1">
    <property type="nucleotide sequence ID" value="XM_712878.1"/>
</dbReference>
<dbReference type="SMR" id="Q5A847"/>
<dbReference type="FunCoup" id="Q5A847">
    <property type="interactions" value="18"/>
</dbReference>
<dbReference type="STRING" id="237561.Q5A847"/>
<dbReference type="EnsemblFungi" id="CR_00750C_A-T">
    <property type="protein sequence ID" value="CR_00750C_A-T-p1"/>
    <property type="gene ID" value="CR_00750C_A"/>
</dbReference>
<dbReference type="GeneID" id="3640438"/>
<dbReference type="KEGG" id="cal:CAALFM_CR00750CA"/>
<dbReference type="CGD" id="CAL0000196618">
    <property type="gene designation" value="orf19.10791"/>
</dbReference>
<dbReference type="VEuPathDB" id="FungiDB:CR_00750C_A"/>
<dbReference type="eggNOG" id="KOG1633">
    <property type="taxonomic scope" value="Eukaryota"/>
</dbReference>
<dbReference type="HOGENOM" id="CLU_003540_6_2_1"/>
<dbReference type="InParanoid" id="Q5A847"/>
<dbReference type="OMA" id="SVYYTVC"/>
<dbReference type="OrthoDB" id="5876800at2759"/>
<dbReference type="PRO" id="PR:Q5A847"/>
<dbReference type="Proteomes" id="UP000000559">
    <property type="component" value="Chromosome R"/>
</dbReference>
<dbReference type="GO" id="GO:0005634">
    <property type="term" value="C:nucleus"/>
    <property type="evidence" value="ECO:0007669"/>
    <property type="project" value="UniProtKB-SubCell"/>
</dbReference>
<dbReference type="GO" id="GO:0032452">
    <property type="term" value="F:histone demethylase activity"/>
    <property type="evidence" value="ECO:0000318"/>
    <property type="project" value="GO_Central"/>
</dbReference>
<dbReference type="GO" id="GO:0140680">
    <property type="term" value="F:histone H3K36me/H3K36me2 demethylase activity"/>
    <property type="evidence" value="ECO:0007669"/>
    <property type="project" value="UniProtKB-EC"/>
</dbReference>
<dbReference type="GO" id="GO:0003712">
    <property type="term" value="F:transcription coregulator activity"/>
    <property type="evidence" value="ECO:0000318"/>
    <property type="project" value="GO_Central"/>
</dbReference>
<dbReference type="GO" id="GO:0008270">
    <property type="term" value="F:zinc ion binding"/>
    <property type="evidence" value="ECO:0007669"/>
    <property type="project" value="UniProtKB-KW"/>
</dbReference>
<dbReference type="GO" id="GO:0006338">
    <property type="term" value="P:chromatin remodeling"/>
    <property type="evidence" value="ECO:0000318"/>
    <property type="project" value="GO_Central"/>
</dbReference>
<dbReference type="GO" id="GO:0006357">
    <property type="term" value="P:regulation of transcription by RNA polymerase II"/>
    <property type="evidence" value="ECO:0000318"/>
    <property type="project" value="GO_Central"/>
</dbReference>
<dbReference type="CDD" id="cd15489">
    <property type="entry name" value="PHD_SF"/>
    <property type="match status" value="1"/>
</dbReference>
<dbReference type="Gene3D" id="2.60.120.650">
    <property type="entry name" value="Cupin"/>
    <property type="match status" value="1"/>
</dbReference>
<dbReference type="InterPro" id="IPR041667">
    <property type="entry name" value="Cupin_8"/>
</dbReference>
<dbReference type="InterPro" id="IPR041070">
    <property type="entry name" value="JHD"/>
</dbReference>
<dbReference type="InterPro" id="IPR050690">
    <property type="entry name" value="JHDM1_Histone_Demethylase"/>
</dbReference>
<dbReference type="InterPro" id="IPR003347">
    <property type="entry name" value="JmjC_dom"/>
</dbReference>
<dbReference type="InterPro" id="IPR019786">
    <property type="entry name" value="Zinc_finger_PHD-type_CS"/>
</dbReference>
<dbReference type="InterPro" id="IPR011011">
    <property type="entry name" value="Znf_FYVE_PHD"/>
</dbReference>
<dbReference type="InterPro" id="IPR001965">
    <property type="entry name" value="Znf_PHD"/>
</dbReference>
<dbReference type="InterPro" id="IPR019787">
    <property type="entry name" value="Znf_PHD-finger"/>
</dbReference>
<dbReference type="PANTHER" id="PTHR23123">
    <property type="entry name" value="PHD/F-BOX CONTAINING PROTEIN"/>
    <property type="match status" value="1"/>
</dbReference>
<dbReference type="Pfam" id="PF13621">
    <property type="entry name" value="Cupin_8"/>
    <property type="match status" value="1"/>
</dbReference>
<dbReference type="Pfam" id="PF17811">
    <property type="entry name" value="JHD"/>
    <property type="match status" value="1"/>
</dbReference>
<dbReference type="Pfam" id="PF00628">
    <property type="entry name" value="PHD"/>
    <property type="match status" value="1"/>
</dbReference>
<dbReference type="SMART" id="SM00558">
    <property type="entry name" value="JmjC"/>
    <property type="match status" value="1"/>
</dbReference>
<dbReference type="SMART" id="SM00249">
    <property type="entry name" value="PHD"/>
    <property type="match status" value="1"/>
</dbReference>
<dbReference type="SUPFAM" id="SSF51197">
    <property type="entry name" value="Clavaminate synthase-like"/>
    <property type="match status" value="1"/>
</dbReference>
<dbReference type="SUPFAM" id="SSF57903">
    <property type="entry name" value="FYVE/PHD zinc finger"/>
    <property type="match status" value="1"/>
</dbReference>
<dbReference type="PROSITE" id="PS51184">
    <property type="entry name" value="JMJC"/>
    <property type="match status" value="1"/>
</dbReference>
<dbReference type="PROSITE" id="PS01359">
    <property type="entry name" value="ZF_PHD_1"/>
    <property type="match status" value="1"/>
</dbReference>
<dbReference type="PROSITE" id="PS50016">
    <property type="entry name" value="ZF_PHD_2"/>
    <property type="match status" value="1"/>
</dbReference>